<comment type="function">
    <text evidence="1">Catalyzes the condensation of ATP and 5-phosphoribose 1-diphosphate to form N'-(5'-phosphoribosyl)-ATP (PR-ATP). Has a crucial role in the pathway because the rate of histidine biosynthesis seems to be controlled primarily by regulation of HisG enzymatic activity (By similarity).</text>
</comment>
<comment type="catalytic activity">
    <reaction>
        <text>1-(5-phospho-beta-D-ribosyl)-ATP + diphosphate = 5-phospho-alpha-D-ribose 1-diphosphate + ATP</text>
        <dbReference type="Rhea" id="RHEA:18473"/>
        <dbReference type="ChEBI" id="CHEBI:30616"/>
        <dbReference type="ChEBI" id="CHEBI:33019"/>
        <dbReference type="ChEBI" id="CHEBI:58017"/>
        <dbReference type="ChEBI" id="CHEBI:73183"/>
        <dbReference type="EC" id="2.4.2.17"/>
    </reaction>
</comment>
<comment type="pathway">
    <text>Amino-acid biosynthesis; L-histidine biosynthesis; L-histidine from 5-phospho-alpha-D-ribose 1-diphosphate: step 1/9.</text>
</comment>
<comment type="subcellular location">
    <subcellularLocation>
        <location evidence="1">Cytoplasm</location>
    </subcellularLocation>
</comment>
<comment type="similarity">
    <text evidence="2">Belongs to the ATP phosphoribosyltransferase family.</text>
</comment>
<keyword id="KW-0028">Amino-acid biosynthesis</keyword>
<keyword id="KW-0067">ATP-binding</keyword>
<keyword id="KW-0963">Cytoplasm</keyword>
<keyword id="KW-0328">Glycosyltransferase</keyword>
<keyword id="KW-0368">Histidine biosynthesis</keyword>
<keyword id="KW-0547">Nucleotide-binding</keyword>
<keyword id="KW-1185">Reference proteome</keyword>
<keyword id="KW-0808">Transferase</keyword>
<reference key="1">
    <citation type="journal article" date="1995" name="Yeast">
        <title>Characterization of Schizosaccharomyces pombe his1 and his5 cDNAs.</title>
        <authorList>
            <person name="Erickson F.L."/>
            <person name="Hannig E.M."/>
        </authorList>
    </citation>
    <scope>NUCLEOTIDE SEQUENCE [MRNA]</scope>
</reference>
<reference key="2">
    <citation type="journal article" date="2002" name="Nature">
        <title>The genome sequence of Schizosaccharomyces pombe.</title>
        <authorList>
            <person name="Wood V."/>
            <person name="Gwilliam R."/>
            <person name="Rajandream M.A."/>
            <person name="Lyne M.H."/>
            <person name="Lyne R."/>
            <person name="Stewart A."/>
            <person name="Sgouros J.G."/>
            <person name="Peat N."/>
            <person name="Hayles J."/>
            <person name="Baker S.G."/>
            <person name="Basham D."/>
            <person name="Bowman S."/>
            <person name="Brooks K."/>
            <person name="Brown D."/>
            <person name="Brown S."/>
            <person name="Chillingworth T."/>
            <person name="Churcher C.M."/>
            <person name="Collins M."/>
            <person name="Connor R."/>
            <person name="Cronin A."/>
            <person name="Davis P."/>
            <person name="Feltwell T."/>
            <person name="Fraser A."/>
            <person name="Gentles S."/>
            <person name="Goble A."/>
            <person name="Hamlin N."/>
            <person name="Harris D.E."/>
            <person name="Hidalgo J."/>
            <person name="Hodgson G."/>
            <person name="Holroyd S."/>
            <person name="Hornsby T."/>
            <person name="Howarth S."/>
            <person name="Huckle E.J."/>
            <person name="Hunt S."/>
            <person name="Jagels K."/>
            <person name="James K.D."/>
            <person name="Jones L."/>
            <person name="Jones M."/>
            <person name="Leather S."/>
            <person name="McDonald S."/>
            <person name="McLean J."/>
            <person name="Mooney P."/>
            <person name="Moule S."/>
            <person name="Mungall K.L."/>
            <person name="Murphy L.D."/>
            <person name="Niblett D."/>
            <person name="Odell C."/>
            <person name="Oliver K."/>
            <person name="O'Neil S."/>
            <person name="Pearson D."/>
            <person name="Quail M.A."/>
            <person name="Rabbinowitsch E."/>
            <person name="Rutherford K.M."/>
            <person name="Rutter S."/>
            <person name="Saunders D."/>
            <person name="Seeger K."/>
            <person name="Sharp S."/>
            <person name="Skelton J."/>
            <person name="Simmonds M.N."/>
            <person name="Squares R."/>
            <person name="Squares S."/>
            <person name="Stevens K."/>
            <person name="Taylor K."/>
            <person name="Taylor R.G."/>
            <person name="Tivey A."/>
            <person name="Walsh S.V."/>
            <person name="Warren T."/>
            <person name="Whitehead S."/>
            <person name="Woodward J.R."/>
            <person name="Volckaert G."/>
            <person name="Aert R."/>
            <person name="Robben J."/>
            <person name="Grymonprez B."/>
            <person name="Weltjens I."/>
            <person name="Vanstreels E."/>
            <person name="Rieger M."/>
            <person name="Schaefer M."/>
            <person name="Mueller-Auer S."/>
            <person name="Gabel C."/>
            <person name="Fuchs M."/>
            <person name="Duesterhoeft A."/>
            <person name="Fritzc C."/>
            <person name="Holzer E."/>
            <person name="Moestl D."/>
            <person name="Hilbert H."/>
            <person name="Borzym K."/>
            <person name="Langer I."/>
            <person name="Beck A."/>
            <person name="Lehrach H."/>
            <person name="Reinhardt R."/>
            <person name="Pohl T.M."/>
            <person name="Eger P."/>
            <person name="Zimmermann W."/>
            <person name="Wedler H."/>
            <person name="Wambutt R."/>
            <person name="Purnelle B."/>
            <person name="Goffeau A."/>
            <person name="Cadieu E."/>
            <person name="Dreano S."/>
            <person name="Gloux S."/>
            <person name="Lelaure V."/>
            <person name="Mottier S."/>
            <person name="Galibert F."/>
            <person name="Aves S.J."/>
            <person name="Xiang Z."/>
            <person name="Hunt C."/>
            <person name="Moore K."/>
            <person name="Hurst S.M."/>
            <person name="Lucas M."/>
            <person name="Rochet M."/>
            <person name="Gaillardin C."/>
            <person name="Tallada V.A."/>
            <person name="Garzon A."/>
            <person name="Thode G."/>
            <person name="Daga R.R."/>
            <person name="Cruzado L."/>
            <person name="Jimenez J."/>
            <person name="Sanchez M."/>
            <person name="del Rey F."/>
            <person name="Benito J."/>
            <person name="Dominguez A."/>
            <person name="Revuelta J.L."/>
            <person name="Moreno S."/>
            <person name="Armstrong J."/>
            <person name="Forsburg S.L."/>
            <person name="Cerutti L."/>
            <person name="Lowe T."/>
            <person name="McCombie W.R."/>
            <person name="Paulsen I."/>
            <person name="Potashkin J."/>
            <person name="Shpakovski G.V."/>
            <person name="Ussery D."/>
            <person name="Barrell B.G."/>
            <person name="Nurse P."/>
        </authorList>
    </citation>
    <scope>NUCLEOTIDE SEQUENCE [LARGE SCALE GENOMIC DNA]</scope>
    <source>
        <strain>972 / ATCC 24843</strain>
    </source>
</reference>
<gene>
    <name type="primary">his1</name>
    <name type="ORF">SPAC25G10.05c</name>
</gene>
<sequence length="310" mass="34029">MDLVNHLEDRLLFAVPKKGRLYESCVNVLKGSDIKFRRNPRLDIALVQNLPIALVFLPAADIPRFVGTGRVHLGITGQDQIAEARLRIGDKLKIEELVDLQFGGCKLQVQVPESGDITSVDQLVGRRIVTSFEYLVAEYFDKVEKKAKSEGKVDSGIKTEISFVSGSVEASCALGIADAVVDLVESGETMRASGLKPIETVMSTSAVLVRSSNCSSELEPLLQTIITRIRGYIIAQQYVLVNYNVNREHLPVVLKITPGKRAPTITTLDEPGWVAVSSMVVKKEVAQVMDKLSQNHAHDILVLSIDNSRP</sequence>
<dbReference type="EC" id="2.4.2.17"/>
<dbReference type="EMBL" id="U07830">
    <property type="protein sequence ID" value="AAA92790.1"/>
    <property type="molecule type" value="mRNA"/>
</dbReference>
<dbReference type="EMBL" id="CU329670">
    <property type="protein sequence ID" value="CAA94634.1"/>
    <property type="molecule type" value="Genomic_DNA"/>
</dbReference>
<dbReference type="PIR" id="S55076">
    <property type="entry name" value="S55076"/>
</dbReference>
<dbReference type="RefSeq" id="NP_594525.1">
    <property type="nucleotide sequence ID" value="NM_001019954.2"/>
</dbReference>
<dbReference type="SMR" id="P40373"/>
<dbReference type="BioGRID" id="279171">
    <property type="interactions" value="23"/>
</dbReference>
<dbReference type="FunCoup" id="P40373">
    <property type="interactions" value="124"/>
</dbReference>
<dbReference type="STRING" id="284812.P40373"/>
<dbReference type="iPTMnet" id="P40373"/>
<dbReference type="PaxDb" id="4896-SPAC25G10.05c.1"/>
<dbReference type="EnsemblFungi" id="SPAC25G10.05c.1">
    <property type="protein sequence ID" value="SPAC25G10.05c.1:pep"/>
    <property type="gene ID" value="SPAC25G10.05c"/>
</dbReference>
<dbReference type="GeneID" id="2542720"/>
<dbReference type="KEGG" id="spo:2542720"/>
<dbReference type="PomBase" id="SPAC25G10.05c">
    <property type="gene designation" value="his1"/>
</dbReference>
<dbReference type="VEuPathDB" id="FungiDB:SPAC25G10.05c"/>
<dbReference type="eggNOG" id="KOG2831">
    <property type="taxonomic scope" value="Eukaryota"/>
</dbReference>
<dbReference type="HOGENOM" id="CLU_038115_1_2_1"/>
<dbReference type="InParanoid" id="P40373"/>
<dbReference type="OMA" id="ITAKKYV"/>
<dbReference type="PhylomeDB" id="P40373"/>
<dbReference type="UniPathway" id="UPA00031">
    <property type="reaction ID" value="UER00006"/>
</dbReference>
<dbReference type="PRO" id="PR:P40373"/>
<dbReference type="Proteomes" id="UP000002485">
    <property type="component" value="Chromosome I"/>
</dbReference>
<dbReference type="GO" id="GO:0005829">
    <property type="term" value="C:cytosol"/>
    <property type="evidence" value="ECO:0007005"/>
    <property type="project" value="PomBase"/>
</dbReference>
<dbReference type="GO" id="GO:0005524">
    <property type="term" value="F:ATP binding"/>
    <property type="evidence" value="ECO:0007669"/>
    <property type="project" value="UniProtKB-KW"/>
</dbReference>
<dbReference type="GO" id="GO:0003879">
    <property type="term" value="F:ATP phosphoribosyltransferase activity"/>
    <property type="evidence" value="ECO:0000316"/>
    <property type="project" value="PomBase"/>
</dbReference>
<dbReference type="GO" id="GO:0000287">
    <property type="term" value="F:magnesium ion binding"/>
    <property type="evidence" value="ECO:0007669"/>
    <property type="project" value="InterPro"/>
</dbReference>
<dbReference type="GO" id="GO:0000105">
    <property type="term" value="P:L-histidine biosynthetic process"/>
    <property type="evidence" value="ECO:0000316"/>
    <property type="project" value="PomBase"/>
</dbReference>
<dbReference type="CDD" id="cd13592">
    <property type="entry name" value="PBP2_HisGL2"/>
    <property type="match status" value="1"/>
</dbReference>
<dbReference type="FunFam" id="3.30.70.120:FF:000003">
    <property type="entry name" value="ATP phosphoribosyltransferase"/>
    <property type="match status" value="1"/>
</dbReference>
<dbReference type="FunFam" id="3.40.190.10:FF:000123">
    <property type="entry name" value="HIS1p ATP phosphoribosyltransferase"/>
    <property type="match status" value="1"/>
</dbReference>
<dbReference type="Gene3D" id="3.30.70.120">
    <property type="match status" value="1"/>
</dbReference>
<dbReference type="Gene3D" id="3.40.190.10">
    <property type="entry name" value="Periplasmic binding protein-like II"/>
    <property type="match status" value="2"/>
</dbReference>
<dbReference type="HAMAP" id="MF_00079">
    <property type="entry name" value="HisG_Long"/>
    <property type="match status" value="1"/>
</dbReference>
<dbReference type="InterPro" id="IPR020621">
    <property type="entry name" value="ATP-PRT_HisG_long"/>
</dbReference>
<dbReference type="InterPro" id="IPR013820">
    <property type="entry name" value="ATP_PRibTrfase_cat"/>
</dbReference>
<dbReference type="InterPro" id="IPR018198">
    <property type="entry name" value="ATP_PRibTrfase_CS"/>
</dbReference>
<dbReference type="InterPro" id="IPR001348">
    <property type="entry name" value="ATP_PRibTrfase_HisG"/>
</dbReference>
<dbReference type="InterPro" id="IPR013115">
    <property type="entry name" value="HisG_C"/>
</dbReference>
<dbReference type="InterPro" id="IPR011322">
    <property type="entry name" value="N-reg_PII-like_a/b"/>
</dbReference>
<dbReference type="InterPro" id="IPR015867">
    <property type="entry name" value="N-reg_PII/ATP_PRibTrfase_C"/>
</dbReference>
<dbReference type="NCBIfam" id="TIGR00070">
    <property type="entry name" value="hisG"/>
    <property type="match status" value="1"/>
</dbReference>
<dbReference type="NCBIfam" id="TIGR03455">
    <property type="entry name" value="HisG_C-term"/>
    <property type="match status" value="1"/>
</dbReference>
<dbReference type="PANTHER" id="PTHR21403:SF8">
    <property type="entry name" value="ATP PHOSPHORIBOSYLTRANSFERASE"/>
    <property type="match status" value="1"/>
</dbReference>
<dbReference type="PANTHER" id="PTHR21403">
    <property type="entry name" value="ATP PHOSPHORIBOSYLTRANSFERASE ATP-PRTASE"/>
    <property type="match status" value="1"/>
</dbReference>
<dbReference type="Pfam" id="PF01634">
    <property type="entry name" value="HisG"/>
    <property type="match status" value="1"/>
</dbReference>
<dbReference type="Pfam" id="PF08029">
    <property type="entry name" value="HisG_C"/>
    <property type="match status" value="1"/>
</dbReference>
<dbReference type="SUPFAM" id="SSF54913">
    <property type="entry name" value="GlnB-like"/>
    <property type="match status" value="1"/>
</dbReference>
<dbReference type="SUPFAM" id="SSF53850">
    <property type="entry name" value="Periplasmic binding protein-like II"/>
    <property type="match status" value="1"/>
</dbReference>
<dbReference type="PROSITE" id="PS01316">
    <property type="entry name" value="ATP_P_PHORIBOSYLTR"/>
    <property type="match status" value="1"/>
</dbReference>
<proteinExistence type="evidence at transcript level"/>
<protein>
    <recommendedName>
        <fullName>ATP phosphoribosyltransferase</fullName>
        <shortName>ATP-PRT</shortName>
        <shortName>ATP-PRTase</shortName>
        <ecNumber>2.4.2.17</ecNumber>
    </recommendedName>
</protein>
<feature type="chain" id="PRO_0000151956" description="ATP phosphoribosyltransferase">
    <location>
        <begin position="1"/>
        <end position="310"/>
    </location>
</feature>
<organism>
    <name type="scientific">Schizosaccharomyces pombe (strain 972 / ATCC 24843)</name>
    <name type="common">Fission yeast</name>
    <dbReference type="NCBI Taxonomy" id="284812"/>
    <lineage>
        <taxon>Eukaryota</taxon>
        <taxon>Fungi</taxon>
        <taxon>Dikarya</taxon>
        <taxon>Ascomycota</taxon>
        <taxon>Taphrinomycotina</taxon>
        <taxon>Schizosaccharomycetes</taxon>
        <taxon>Schizosaccharomycetales</taxon>
        <taxon>Schizosaccharomycetaceae</taxon>
        <taxon>Schizosaccharomyces</taxon>
    </lineage>
</organism>
<name>HIS1_SCHPO</name>
<accession>P40373</accession>
<evidence type="ECO:0000250" key="1"/>
<evidence type="ECO:0000305" key="2"/>